<proteinExistence type="evidence at protein level"/>
<reference key="1">
    <citation type="journal article" date="1995" name="Mol. Microbiol.">
        <title>Analysis of a chemotaxis operon in Rhizobium meliloti.</title>
        <authorList>
            <person name="Greck M."/>
            <person name="Platzer J."/>
            <person name="Sourjik V."/>
            <person name="Schmitt R."/>
        </authorList>
    </citation>
    <scope>NUCLEOTIDE SEQUENCE [GENOMIC DNA]</scope>
    <source>
        <strain>RU11/001</strain>
    </source>
</reference>
<reference key="2">
    <citation type="journal article" date="2001" name="Proc. Natl. Acad. Sci. U.S.A.">
        <title>Analysis of the chromosome sequence of the legume symbiont Sinorhizobium meliloti strain 1021.</title>
        <authorList>
            <person name="Capela D."/>
            <person name="Barloy-Hubler F."/>
            <person name="Gouzy J."/>
            <person name="Bothe G."/>
            <person name="Ampe F."/>
            <person name="Batut J."/>
            <person name="Boistard P."/>
            <person name="Becker A."/>
            <person name="Boutry M."/>
            <person name="Cadieu E."/>
            <person name="Dreano S."/>
            <person name="Gloux S."/>
            <person name="Godrie T."/>
            <person name="Goffeau A."/>
            <person name="Kahn D."/>
            <person name="Kiss E."/>
            <person name="Lelaure V."/>
            <person name="Masuy D."/>
            <person name="Pohl T."/>
            <person name="Portetelle D."/>
            <person name="Puehler A."/>
            <person name="Purnelle B."/>
            <person name="Ramsperger U."/>
            <person name="Renard C."/>
            <person name="Thebault P."/>
            <person name="Vandenbol M."/>
            <person name="Weidner S."/>
            <person name="Galibert F."/>
        </authorList>
    </citation>
    <scope>NUCLEOTIDE SEQUENCE [LARGE SCALE GENOMIC DNA]</scope>
    <source>
        <strain>1021</strain>
    </source>
</reference>
<reference key="3">
    <citation type="journal article" date="2001" name="Science">
        <title>The composite genome of the legume symbiont Sinorhizobium meliloti.</title>
        <authorList>
            <person name="Galibert F."/>
            <person name="Finan T.M."/>
            <person name="Long S.R."/>
            <person name="Puehler A."/>
            <person name="Abola P."/>
            <person name="Ampe F."/>
            <person name="Barloy-Hubler F."/>
            <person name="Barnett M.J."/>
            <person name="Becker A."/>
            <person name="Boistard P."/>
            <person name="Bothe G."/>
            <person name="Boutry M."/>
            <person name="Bowser L."/>
            <person name="Buhrmester J."/>
            <person name="Cadieu E."/>
            <person name="Capela D."/>
            <person name="Chain P."/>
            <person name="Cowie A."/>
            <person name="Davis R.W."/>
            <person name="Dreano S."/>
            <person name="Federspiel N.A."/>
            <person name="Fisher R.F."/>
            <person name="Gloux S."/>
            <person name="Godrie T."/>
            <person name="Goffeau A."/>
            <person name="Golding B."/>
            <person name="Gouzy J."/>
            <person name="Gurjal M."/>
            <person name="Hernandez-Lucas I."/>
            <person name="Hong A."/>
            <person name="Huizar L."/>
            <person name="Hyman R.W."/>
            <person name="Jones T."/>
            <person name="Kahn D."/>
            <person name="Kahn M.L."/>
            <person name="Kalman S."/>
            <person name="Keating D.H."/>
            <person name="Kiss E."/>
            <person name="Komp C."/>
            <person name="Lelaure V."/>
            <person name="Masuy D."/>
            <person name="Palm C."/>
            <person name="Peck M.C."/>
            <person name="Pohl T.M."/>
            <person name="Portetelle D."/>
            <person name="Purnelle B."/>
            <person name="Ramsperger U."/>
            <person name="Surzycki R."/>
            <person name="Thebault P."/>
            <person name="Vandenbol M."/>
            <person name="Vorhoelter F.J."/>
            <person name="Weidner S."/>
            <person name="Wells D.H."/>
            <person name="Wong K."/>
            <person name="Yeh K.-C."/>
            <person name="Batut J."/>
        </authorList>
    </citation>
    <scope>NUCLEOTIDE SEQUENCE [LARGE SCALE GENOMIC DNA]</scope>
    <source>
        <strain>1021</strain>
    </source>
</reference>
<keyword id="KW-0067">ATP-binding</keyword>
<keyword id="KW-0145">Chemotaxis</keyword>
<keyword id="KW-0963">Cytoplasm</keyword>
<keyword id="KW-0418">Kinase</keyword>
<keyword id="KW-0547">Nucleotide-binding</keyword>
<keyword id="KW-0597">Phosphoprotein</keyword>
<keyword id="KW-1185">Reference proteome</keyword>
<keyword id="KW-0808">Transferase</keyword>
<keyword id="KW-0902">Two-component regulatory system</keyword>
<protein>
    <recommendedName>
        <fullName>Chemotaxis protein CheA</fullName>
        <ecNumber>2.7.13.3</ecNumber>
    </recommendedName>
</protein>
<gene>
    <name type="primary">cheA</name>
    <name type="ordered locus">R00639</name>
    <name type="ORF">SMc03007</name>
</gene>
<feature type="chain" id="PRO_0000074716" description="Chemotaxis protein CheA">
    <location>
        <begin position="1"/>
        <end position="758"/>
    </location>
</feature>
<feature type="domain" description="HPt" evidence="4">
    <location>
        <begin position="1"/>
        <end position="103"/>
    </location>
</feature>
<feature type="domain" description="Histidine kinase" evidence="3">
    <location>
        <begin position="367"/>
        <end position="607"/>
    </location>
</feature>
<feature type="domain" description="CheW-like" evidence="2">
    <location>
        <begin position="609"/>
        <end position="745"/>
    </location>
</feature>
<feature type="region of interest" description="Disordered" evidence="5">
    <location>
        <begin position="293"/>
        <end position="346"/>
    </location>
</feature>
<feature type="compositionally biased region" description="Basic and acidic residues" evidence="5">
    <location>
        <begin position="297"/>
        <end position="308"/>
    </location>
</feature>
<feature type="compositionally biased region" description="Polar residues" evidence="5">
    <location>
        <begin position="320"/>
        <end position="339"/>
    </location>
</feature>
<feature type="modified residue" description="Phosphohistidine; by autocatalysis" evidence="3">
    <location>
        <position position="46"/>
    </location>
</feature>
<feature type="sequence conflict" description="In Ref. 1; AAA86674." evidence="6" ref="1">
    <original>D</original>
    <variation>E</variation>
    <location>
        <position position="189"/>
    </location>
</feature>
<feature type="sequence conflict" description="In Ref. 1; AAA86674." evidence="6" ref="1">
    <original>S</original>
    <variation>A</variation>
    <location>
        <position position="192"/>
    </location>
</feature>
<feature type="sequence conflict" description="In Ref. 1; AAA86674." evidence="6" ref="1">
    <original>N</original>
    <variation>D</variation>
    <location>
        <position position="215"/>
    </location>
</feature>
<feature type="sequence conflict" description="In Ref. 1; AAA86674." evidence="6" ref="1">
    <original>E</original>
    <variation>K</variation>
    <location>
        <position position="297"/>
    </location>
</feature>
<feature type="sequence conflict" description="In Ref. 1; AAA86674." evidence="6" ref="1">
    <original>S</original>
    <variation>P</variation>
    <location>
        <position position="308"/>
    </location>
</feature>
<dbReference type="EC" id="2.7.13.3"/>
<dbReference type="EMBL" id="U13166">
    <property type="protein sequence ID" value="AAA86674.1"/>
    <property type="molecule type" value="Genomic_DNA"/>
</dbReference>
<dbReference type="EMBL" id="AL591688">
    <property type="protein sequence ID" value="CAC45211.1"/>
    <property type="molecule type" value="Genomic_DNA"/>
</dbReference>
<dbReference type="PIR" id="S61834">
    <property type="entry name" value="S61834"/>
</dbReference>
<dbReference type="RefSeq" id="NP_384745.1">
    <property type="nucleotide sequence ID" value="NC_003047.1"/>
</dbReference>
<dbReference type="RefSeq" id="WP_003529948.1">
    <property type="nucleotide sequence ID" value="NC_003047.1"/>
</dbReference>
<dbReference type="SMR" id="Q52880"/>
<dbReference type="IntAct" id="Q52880">
    <property type="interactions" value="3"/>
</dbReference>
<dbReference type="EnsemblBacteria" id="CAC45211">
    <property type="protein sequence ID" value="CAC45211"/>
    <property type="gene ID" value="SMc03007"/>
</dbReference>
<dbReference type="KEGG" id="sme:SMc03007"/>
<dbReference type="PATRIC" id="fig|266834.11.peg.2012"/>
<dbReference type="eggNOG" id="COG0643">
    <property type="taxonomic scope" value="Bacteria"/>
</dbReference>
<dbReference type="eggNOG" id="COG2198">
    <property type="taxonomic scope" value="Bacteria"/>
</dbReference>
<dbReference type="HOGENOM" id="CLU_000650_3_6_5"/>
<dbReference type="OrthoDB" id="9803176at2"/>
<dbReference type="BRENDA" id="2.7.13.3">
    <property type="organism ID" value="5347"/>
</dbReference>
<dbReference type="Proteomes" id="UP000001976">
    <property type="component" value="Chromosome"/>
</dbReference>
<dbReference type="GO" id="GO:0005737">
    <property type="term" value="C:cytoplasm"/>
    <property type="evidence" value="ECO:0007669"/>
    <property type="project" value="UniProtKB-SubCell"/>
</dbReference>
<dbReference type="GO" id="GO:0005524">
    <property type="term" value="F:ATP binding"/>
    <property type="evidence" value="ECO:0007669"/>
    <property type="project" value="UniProtKB-KW"/>
</dbReference>
<dbReference type="GO" id="GO:0000155">
    <property type="term" value="F:phosphorelay sensor kinase activity"/>
    <property type="evidence" value="ECO:0007669"/>
    <property type="project" value="InterPro"/>
</dbReference>
<dbReference type="GO" id="GO:0006935">
    <property type="term" value="P:chemotaxis"/>
    <property type="evidence" value="ECO:0007669"/>
    <property type="project" value="UniProtKB-KW"/>
</dbReference>
<dbReference type="CDD" id="cd00731">
    <property type="entry name" value="CheA_reg"/>
    <property type="match status" value="1"/>
</dbReference>
<dbReference type="CDD" id="cd16916">
    <property type="entry name" value="HATPase_CheA-like"/>
    <property type="match status" value="1"/>
</dbReference>
<dbReference type="CDD" id="cd00088">
    <property type="entry name" value="HPT"/>
    <property type="match status" value="1"/>
</dbReference>
<dbReference type="FunFam" id="2.30.30.40:FF:000048">
    <property type="entry name" value="Chemotaxis protein CheA, putative"/>
    <property type="match status" value="1"/>
</dbReference>
<dbReference type="FunFam" id="3.30.565.10:FF:000016">
    <property type="entry name" value="Chemotaxis protein CheA, putative"/>
    <property type="match status" value="1"/>
</dbReference>
<dbReference type="FunFam" id="1.20.120.160:FF:000008">
    <property type="entry name" value="Chemotaxis sensor histidine kinase CheA"/>
    <property type="match status" value="1"/>
</dbReference>
<dbReference type="FunFam" id="1.10.287.560:FF:000001">
    <property type="entry name" value="Histidine kinase chemotaxis protein CheA"/>
    <property type="match status" value="1"/>
</dbReference>
<dbReference type="Gene3D" id="1.10.287.560">
    <property type="entry name" value="Histidine kinase CheA-like, homodimeric domain"/>
    <property type="match status" value="1"/>
</dbReference>
<dbReference type="Gene3D" id="3.30.565.10">
    <property type="entry name" value="Histidine kinase-like ATPase, C-terminal domain"/>
    <property type="match status" value="1"/>
</dbReference>
<dbReference type="Gene3D" id="1.20.120.160">
    <property type="entry name" value="HPT domain"/>
    <property type="match status" value="1"/>
</dbReference>
<dbReference type="Gene3D" id="2.30.30.40">
    <property type="entry name" value="SH3 Domains"/>
    <property type="match status" value="1"/>
</dbReference>
<dbReference type="InterPro" id="IPR051315">
    <property type="entry name" value="Bact_Chemotaxis_CheA"/>
</dbReference>
<dbReference type="InterPro" id="IPR004105">
    <property type="entry name" value="CheA-like_dim"/>
</dbReference>
<dbReference type="InterPro" id="IPR037006">
    <property type="entry name" value="CheA-like_homodim_sf"/>
</dbReference>
<dbReference type="InterPro" id="IPR036061">
    <property type="entry name" value="CheW-like_dom_sf"/>
</dbReference>
<dbReference type="InterPro" id="IPR002545">
    <property type="entry name" value="CheW-lke_dom"/>
</dbReference>
<dbReference type="InterPro" id="IPR036890">
    <property type="entry name" value="HATPase_C_sf"/>
</dbReference>
<dbReference type="InterPro" id="IPR005467">
    <property type="entry name" value="His_kinase_dom"/>
</dbReference>
<dbReference type="InterPro" id="IPR036097">
    <property type="entry name" value="HisK_dim/P_sf"/>
</dbReference>
<dbReference type="InterPro" id="IPR036641">
    <property type="entry name" value="HPT_dom_sf"/>
</dbReference>
<dbReference type="InterPro" id="IPR004358">
    <property type="entry name" value="Sig_transdc_His_kin-like_C"/>
</dbReference>
<dbReference type="InterPro" id="IPR008207">
    <property type="entry name" value="Sig_transdc_His_kin_Hpt_dom"/>
</dbReference>
<dbReference type="PANTHER" id="PTHR43395:SF10">
    <property type="entry name" value="CHEMOTAXIS PROTEIN CHEA"/>
    <property type="match status" value="1"/>
</dbReference>
<dbReference type="PANTHER" id="PTHR43395">
    <property type="entry name" value="SENSOR HISTIDINE KINASE CHEA"/>
    <property type="match status" value="1"/>
</dbReference>
<dbReference type="Pfam" id="PF01584">
    <property type="entry name" value="CheW"/>
    <property type="match status" value="1"/>
</dbReference>
<dbReference type="Pfam" id="PF02895">
    <property type="entry name" value="H-kinase_dim"/>
    <property type="match status" value="1"/>
</dbReference>
<dbReference type="Pfam" id="PF02518">
    <property type="entry name" value="HATPase_c"/>
    <property type="match status" value="1"/>
</dbReference>
<dbReference type="Pfam" id="PF01627">
    <property type="entry name" value="Hpt"/>
    <property type="match status" value="1"/>
</dbReference>
<dbReference type="PRINTS" id="PR00344">
    <property type="entry name" value="BCTRLSENSOR"/>
</dbReference>
<dbReference type="SMART" id="SM00260">
    <property type="entry name" value="CheW"/>
    <property type="match status" value="1"/>
</dbReference>
<dbReference type="SMART" id="SM01231">
    <property type="entry name" value="H-kinase_dim"/>
    <property type="match status" value="1"/>
</dbReference>
<dbReference type="SMART" id="SM00387">
    <property type="entry name" value="HATPase_c"/>
    <property type="match status" value="1"/>
</dbReference>
<dbReference type="SMART" id="SM00073">
    <property type="entry name" value="HPT"/>
    <property type="match status" value="1"/>
</dbReference>
<dbReference type="SUPFAM" id="SSF55874">
    <property type="entry name" value="ATPase domain of HSP90 chaperone/DNA topoisomerase II/histidine kinase"/>
    <property type="match status" value="1"/>
</dbReference>
<dbReference type="SUPFAM" id="SSF50341">
    <property type="entry name" value="CheW-like"/>
    <property type="match status" value="1"/>
</dbReference>
<dbReference type="SUPFAM" id="SSF47226">
    <property type="entry name" value="Histidine-containing phosphotransfer domain, HPT domain"/>
    <property type="match status" value="1"/>
</dbReference>
<dbReference type="SUPFAM" id="SSF47384">
    <property type="entry name" value="Homodimeric domain of signal transducing histidine kinase"/>
    <property type="match status" value="1"/>
</dbReference>
<dbReference type="PROSITE" id="PS50851">
    <property type="entry name" value="CHEW"/>
    <property type="match status" value="1"/>
</dbReference>
<dbReference type="PROSITE" id="PS50109">
    <property type="entry name" value="HIS_KIN"/>
    <property type="match status" value="1"/>
</dbReference>
<dbReference type="PROSITE" id="PS50894">
    <property type="entry name" value="HPT"/>
    <property type="match status" value="1"/>
</dbReference>
<accession>Q52880</accession>
<evidence type="ECO:0000250" key="1"/>
<evidence type="ECO:0000255" key="2">
    <source>
        <dbReference type="PROSITE-ProRule" id="PRU00052"/>
    </source>
</evidence>
<evidence type="ECO:0000255" key="3">
    <source>
        <dbReference type="PROSITE-ProRule" id="PRU00107"/>
    </source>
</evidence>
<evidence type="ECO:0000255" key="4">
    <source>
        <dbReference type="PROSITE-ProRule" id="PRU00110"/>
    </source>
</evidence>
<evidence type="ECO:0000256" key="5">
    <source>
        <dbReference type="SAM" id="MobiDB-lite"/>
    </source>
</evidence>
<evidence type="ECO:0000305" key="6"/>
<name>CHEA_RHIME</name>
<comment type="function">
    <text evidence="1">Involved in the transmission of sensory signals from the chemoreceptors to the flagellar motors. CheA is autophosphorylated; it can transfer its phosphate group to either CheB or CheY (By similarity).</text>
</comment>
<comment type="catalytic activity">
    <reaction>
        <text>ATP + protein L-histidine = ADP + protein N-phospho-L-histidine.</text>
        <dbReference type="EC" id="2.7.13.3"/>
    </reaction>
</comment>
<comment type="interaction">
    <interactant intactId="EBI-6403466">
        <id>Q52880</id>
    </interactant>
    <interactant intactId="EBI-6417929">
        <id>Q52879</id>
        <label>cheY1</label>
    </interactant>
    <organismsDiffer>true</organismsDiffer>
    <experiments>2</experiments>
</comment>
<comment type="interaction">
    <interactant intactId="EBI-6403466">
        <id>Q52880</id>
    </interactant>
    <interactant intactId="EBI-6403471">
        <id>Q52884</id>
        <label>cheY2</label>
    </interactant>
    <organismsDiffer>true</organismsDiffer>
    <experiments>6</experiments>
</comment>
<comment type="interaction">
    <interactant intactId="EBI-6403466">
        <id>Q52880</id>
    </interactant>
    <interactant intactId="EBI-6417877">
        <id>Q52878</id>
        <label>orf2</label>
    </interactant>
    <organismsDiffer>true</organismsDiffer>
    <experiments>5</experiments>
</comment>
<comment type="subcellular location">
    <subcellularLocation>
        <location evidence="6">Cytoplasm</location>
    </subcellularLocation>
</comment>
<organism>
    <name type="scientific">Rhizobium meliloti (strain 1021)</name>
    <name type="common">Ensifer meliloti</name>
    <name type="synonym">Sinorhizobium meliloti</name>
    <dbReference type="NCBI Taxonomy" id="266834"/>
    <lineage>
        <taxon>Bacteria</taxon>
        <taxon>Pseudomonadati</taxon>
        <taxon>Pseudomonadota</taxon>
        <taxon>Alphaproteobacteria</taxon>
        <taxon>Hyphomicrobiales</taxon>
        <taxon>Rhizobiaceae</taxon>
        <taxon>Sinorhizobium/Ensifer group</taxon>
        <taxon>Sinorhizobium</taxon>
    </lineage>
</organism>
<sequence length="758" mass="81102">MDMNEIKEIFFQECEEQLAELESGLLKLNDGDRDPETVNAVFRAVHSIKGGAGAFGLDDLVSFAHVFETTLDCVRSNRLEPNQDVLKVMLRSADVLADLTNAARDGGGVDEARSRQLIKELEALANGELPQAAAESAPKTTPAGVAPAAPVVNEEGFQPVAFSFDDFETGDEPTIEPSTYEIVFKPKSDLYSKGNDATLLLRDLSRLGEMSIHCNMDTLPPLDRMNPEEAYFSWKISLKTDKGEEAIRSVFEFAEWDCELDVALAGGTVGMDEDLPMQPVPFDLSILEDEAQAPAGEEDRAAASEGDSRNAAVAAAQTASNVLQMAQSTARVSPENARNSQSASAAQAAAQQAASAATPTIRVDLDRVDRLINLVGELVINQAMLSQSVIENDTNGTSSINMGLEELQQLTREIQDSVMAIRAQPVKPVFQRMSRIVREIADMTGKSVRLITEGENTEVDKTVIDKLAEPLTHMIRNAVDHGLETPEKRVAAGKNPEGTVRLTAKHRSGRIVIELADDGAGINREKVRQKAIDNDLIAADANLSDEEVDNLIFHAGFSTADKISDISGRGVGMDVVKRSIQALGGRINISSKPGQGSIFTMSLPLTLAVLDGMVVTVANQTLVVPLTAIVETLQPEASAIHSFGSSQRLISIRDSFCPLVDVGRILNFRGAQANPVEGVALLVESEGGGQRALMVDAIQGQRQVVIKSLEANYTHVPGIAAATILGDGRVALILDVDAIVAASRGQSLKPEMSLAAAG</sequence>